<protein>
    <recommendedName>
        <fullName evidence="1">Aspartate carbamoyltransferase catalytic subunit</fullName>
        <ecNumber evidence="1">2.1.3.2</ecNumber>
    </recommendedName>
    <alternativeName>
        <fullName evidence="1">Aspartate transcarbamylase</fullName>
        <shortName evidence="1">ATCase</shortName>
    </alternativeName>
</protein>
<name>PYRB_ECO27</name>
<reference key="1">
    <citation type="journal article" date="2009" name="J. Bacteriol.">
        <title>Complete genome sequence and comparative genome analysis of enteropathogenic Escherichia coli O127:H6 strain E2348/69.</title>
        <authorList>
            <person name="Iguchi A."/>
            <person name="Thomson N.R."/>
            <person name="Ogura Y."/>
            <person name="Saunders D."/>
            <person name="Ooka T."/>
            <person name="Henderson I.R."/>
            <person name="Harris D."/>
            <person name="Asadulghani M."/>
            <person name="Kurokawa K."/>
            <person name="Dean P."/>
            <person name="Kenny B."/>
            <person name="Quail M.A."/>
            <person name="Thurston S."/>
            <person name="Dougan G."/>
            <person name="Hayashi T."/>
            <person name="Parkhill J."/>
            <person name="Frankel G."/>
        </authorList>
    </citation>
    <scope>NUCLEOTIDE SEQUENCE [LARGE SCALE GENOMIC DNA]</scope>
    <source>
        <strain>E2348/69 / EPEC</strain>
    </source>
</reference>
<sequence length="311" mass="34427">MANPLYQKHIISINDLSRDDLNLVLATAAKLKANPQPELLKHKVIASCFFEASTRTRLSFETSMHRLGASVVGFSDSANTSLGKKGETLADTISVISTYVDAIVMRHPQEGAARLATEFSGNVPVLNAGDGSNQHPTQTLLDLFTIQETQGRLDNLHVAMVGDLKYGRTVHSLTQALAKFDGNRFYFIAPDALAMPQYILDMLDEKGIAWSLHSSIEEVMAEVDILYMTRVQKERLDPSEYANVKAQFVLRASDLHNAKANMKVLHPLPRVDEIATDVDKTPHAWYFQQAGNGIFARQALLALVLNRDLVL</sequence>
<dbReference type="EC" id="2.1.3.2" evidence="1"/>
<dbReference type="EMBL" id="FM180568">
    <property type="protein sequence ID" value="CAS12119.1"/>
    <property type="molecule type" value="Genomic_DNA"/>
</dbReference>
<dbReference type="RefSeq" id="WP_000013046.1">
    <property type="nucleotide sequence ID" value="NC_011601.1"/>
</dbReference>
<dbReference type="SMR" id="B7UQQ5"/>
<dbReference type="GeneID" id="93777579"/>
<dbReference type="KEGG" id="ecg:E2348C_4571"/>
<dbReference type="HOGENOM" id="CLU_043846_1_2_6"/>
<dbReference type="UniPathway" id="UPA00070">
    <property type="reaction ID" value="UER00116"/>
</dbReference>
<dbReference type="Proteomes" id="UP000008205">
    <property type="component" value="Chromosome"/>
</dbReference>
<dbReference type="GO" id="GO:0005829">
    <property type="term" value="C:cytosol"/>
    <property type="evidence" value="ECO:0007669"/>
    <property type="project" value="TreeGrafter"/>
</dbReference>
<dbReference type="GO" id="GO:0016597">
    <property type="term" value="F:amino acid binding"/>
    <property type="evidence" value="ECO:0007669"/>
    <property type="project" value="InterPro"/>
</dbReference>
<dbReference type="GO" id="GO:0004070">
    <property type="term" value="F:aspartate carbamoyltransferase activity"/>
    <property type="evidence" value="ECO:0007669"/>
    <property type="project" value="UniProtKB-UniRule"/>
</dbReference>
<dbReference type="GO" id="GO:0006207">
    <property type="term" value="P:'de novo' pyrimidine nucleobase biosynthetic process"/>
    <property type="evidence" value="ECO:0007669"/>
    <property type="project" value="InterPro"/>
</dbReference>
<dbReference type="GO" id="GO:0044205">
    <property type="term" value="P:'de novo' UMP biosynthetic process"/>
    <property type="evidence" value="ECO:0007669"/>
    <property type="project" value="UniProtKB-UniRule"/>
</dbReference>
<dbReference type="GO" id="GO:0006520">
    <property type="term" value="P:amino acid metabolic process"/>
    <property type="evidence" value="ECO:0007669"/>
    <property type="project" value="InterPro"/>
</dbReference>
<dbReference type="FunFam" id="3.40.50.1370:FF:000001">
    <property type="entry name" value="Aspartate carbamoyltransferase"/>
    <property type="match status" value="1"/>
</dbReference>
<dbReference type="FunFam" id="3.40.50.1370:FF:000002">
    <property type="entry name" value="Aspartate carbamoyltransferase 2"/>
    <property type="match status" value="1"/>
</dbReference>
<dbReference type="Gene3D" id="3.40.50.1370">
    <property type="entry name" value="Aspartate/ornithine carbamoyltransferase"/>
    <property type="match status" value="2"/>
</dbReference>
<dbReference type="HAMAP" id="MF_00001">
    <property type="entry name" value="Asp_carb_tr"/>
    <property type="match status" value="1"/>
</dbReference>
<dbReference type="InterPro" id="IPR006132">
    <property type="entry name" value="Asp/Orn_carbamoyltranf_P-bd"/>
</dbReference>
<dbReference type="InterPro" id="IPR006130">
    <property type="entry name" value="Asp/Orn_carbamoylTrfase"/>
</dbReference>
<dbReference type="InterPro" id="IPR036901">
    <property type="entry name" value="Asp/Orn_carbamoylTrfase_sf"/>
</dbReference>
<dbReference type="InterPro" id="IPR002082">
    <property type="entry name" value="Asp_carbamoyltransf"/>
</dbReference>
<dbReference type="InterPro" id="IPR006131">
    <property type="entry name" value="Asp_carbamoyltransf_Asp/Orn-bd"/>
</dbReference>
<dbReference type="NCBIfam" id="TIGR00670">
    <property type="entry name" value="asp_carb_tr"/>
    <property type="match status" value="1"/>
</dbReference>
<dbReference type="NCBIfam" id="NF002032">
    <property type="entry name" value="PRK00856.1"/>
    <property type="match status" value="1"/>
</dbReference>
<dbReference type="PANTHER" id="PTHR45753:SF6">
    <property type="entry name" value="ASPARTATE CARBAMOYLTRANSFERASE"/>
    <property type="match status" value="1"/>
</dbReference>
<dbReference type="PANTHER" id="PTHR45753">
    <property type="entry name" value="ORNITHINE CARBAMOYLTRANSFERASE, MITOCHONDRIAL"/>
    <property type="match status" value="1"/>
</dbReference>
<dbReference type="Pfam" id="PF00185">
    <property type="entry name" value="OTCace"/>
    <property type="match status" value="1"/>
</dbReference>
<dbReference type="Pfam" id="PF02729">
    <property type="entry name" value="OTCace_N"/>
    <property type="match status" value="1"/>
</dbReference>
<dbReference type="PRINTS" id="PR00100">
    <property type="entry name" value="AOTCASE"/>
</dbReference>
<dbReference type="PRINTS" id="PR00101">
    <property type="entry name" value="ATCASE"/>
</dbReference>
<dbReference type="SUPFAM" id="SSF53671">
    <property type="entry name" value="Aspartate/ornithine carbamoyltransferase"/>
    <property type="match status" value="1"/>
</dbReference>
<dbReference type="PROSITE" id="PS00097">
    <property type="entry name" value="CARBAMOYLTRANSFERASE"/>
    <property type="match status" value="1"/>
</dbReference>
<keyword id="KW-0665">Pyrimidine biosynthesis</keyword>
<keyword id="KW-1185">Reference proteome</keyword>
<keyword id="KW-0808">Transferase</keyword>
<evidence type="ECO:0000255" key="1">
    <source>
        <dbReference type="HAMAP-Rule" id="MF_00001"/>
    </source>
</evidence>
<organism>
    <name type="scientific">Escherichia coli O127:H6 (strain E2348/69 / EPEC)</name>
    <dbReference type="NCBI Taxonomy" id="574521"/>
    <lineage>
        <taxon>Bacteria</taxon>
        <taxon>Pseudomonadati</taxon>
        <taxon>Pseudomonadota</taxon>
        <taxon>Gammaproteobacteria</taxon>
        <taxon>Enterobacterales</taxon>
        <taxon>Enterobacteriaceae</taxon>
        <taxon>Escherichia</taxon>
    </lineage>
</organism>
<accession>B7UQQ5</accession>
<feature type="chain" id="PRO_1000116140" description="Aspartate carbamoyltransferase catalytic subunit">
    <location>
        <begin position="1"/>
        <end position="311"/>
    </location>
</feature>
<feature type="binding site" evidence="1">
    <location>
        <position position="55"/>
    </location>
    <ligand>
        <name>carbamoyl phosphate</name>
        <dbReference type="ChEBI" id="CHEBI:58228"/>
    </ligand>
</feature>
<feature type="binding site" evidence="1">
    <location>
        <position position="56"/>
    </location>
    <ligand>
        <name>carbamoyl phosphate</name>
        <dbReference type="ChEBI" id="CHEBI:58228"/>
    </ligand>
</feature>
<feature type="binding site" evidence="1">
    <location>
        <position position="85"/>
    </location>
    <ligand>
        <name>L-aspartate</name>
        <dbReference type="ChEBI" id="CHEBI:29991"/>
    </ligand>
</feature>
<feature type="binding site" evidence="1">
    <location>
        <position position="106"/>
    </location>
    <ligand>
        <name>carbamoyl phosphate</name>
        <dbReference type="ChEBI" id="CHEBI:58228"/>
    </ligand>
</feature>
<feature type="binding site" evidence="1">
    <location>
        <position position="135"/>
    </location>
    <ligand>
        <name>carbamoyl phosphate</name>
        <dbReference type="ChEBI" id="CHEBI:58228"/>
    </ligand>
</feature>
<feature type="binding site" evidence="1">
    <location>
        <position position="138"/>
    </location>
    <ligand>
        <name>carbamoyl phosphate</name>
        <dbReference type="ChEBI" id="CHEBI:58228"/>
    </ligand>
</feature>
<feature type="binding site" evidence="1">
    <location>
        <position position="168"/>
    </location>
    <ligand>
        <name>L-aspartate</name>
        <dbReference type="ChEBI" id="CHEBI:29991"/>
    </ligand>
</feature>
<feature type="binding site" evidence="1">
    <location>
        <position position="230"/>
    </location>
    <ligand>
        <name>L-aspartate</name>
        <dbReference type="ChEBI" id="CHEBI:29991"/>
    </ligand>
</feature>
<feature type="binding site" evidence="1">
    <location>
        <position position="268"/>
    </location>
    <ligand>
        <name>carbamoyl phosphate</name>
        <dbReference type="ChEBI" id="CHEBI:58228"/>
    </ligand>
</feature>
<feature type="binding site" evidence="1">
    <location>
        <position position="269"/>
    </location>
    <ligand>
        <name>carbamoyl phosphate</name>
        <dbReference type="ChEBI" id="CHEBI:58228"/>
    </ligand>
</feature>
<comment type="function">
    <text evidence="1">Catalyzes the condensation of carbamoyl phosphate and aspartate to form carbamoyl aspartate and inorganic phosphate, the committed step in the de novo pyrimidine nucleotide biosynthesis pathway.</text>
</comment>
<comment type="catalytic activity">
    <reaction evidence="1">
        <text>carbamoyl phosphate + L-aspartate = N-carbamoyl-L-aspartate + phosphate + H(+)</text>
        <dbReference type="Rhea" id="RHEA:20013"/>
        <dbReference type="ChEBI" id="CHEBI:15378"/>
        <dbReference type="ChEBI" id="CHEBI:29991"/>
        <dbReference type="ChEBI" id="CHEBI:32814"/>
        <dbReference type="ChEBI" id="CHEBI:43474"/>
        <dbReference type="ChEBI" id="CHEBI:58228"/>
        <dbReference type="EC" id="2.1.3.2"/>
    </reaction>
</comment>
<comment type="pathway">
    <text evidence="1">Pyrimidine metabolism; UMP biosynthesis via de novo pathway; (S)-dihydroorotate from bicarbonate: step 2/3.</text>
</comment>
<comment type="subunit">
    <text evidence="1">Heterododecamer (2C3:3R2) of six catalytic PyrB chains organized as two trimers (C3), and six regulatory PyrI chains organized as three dimers (R2).</text>
</comment>
<comment type="similarity">
    <text evidence="1">Belongs to the aspartate/ornithine carbamoyltransferase superfamily. ATCase family.</text>
</comment>
<proteinExistence type="inferred from homology"/>
<gene>
    <name evidence="1" type="primary">pyrB</name>
    <name type="ordered locus">E2348C_4571</name>
</gene>